<dbReference type="EMBL" id="BX000453">
    <property type="protein sequence ID" value="CAM15102.1"/>
    <property type="molecule type" value="Genomic_DNA"/>
</dbReference>
<dbReference type="EMBL" id="CT030217">
    <property type="status" value="NOT_ANNOTATED_CDS"/>
    <property type="molecule type" value="Genomic_DNA"/>
</dbReference>
<dbReference type="EMBL" id="BC093280">
    <property type="protein sequence ID" value="AAH93280.1"/>
    <property type="molecule type" value="mRNA"/>
</dbReference>
<dbReference type="RefSeq" id="NP_001017638.1">
    <property type="nucleotide sequence ID" value="NM_001017638.1"/>
</dbReference>
<dbReference type="SMR" id="Q566Y1"/>
<dbReference type="FunCoup" id="Q566Y1">
    <property type="interactions" value="1637"/>
</dbReference>
<dbReference type="STRING" id="7955.ENSDARP00000131946"/>
<dbReference type="PaxDb" id="7955-ENSDARP00000015880"/>
<dbReference type="Ensembl" id="ENSDART00000002498">
    <property type="protein sequence ID" value="ENSDARP00000015880"/>
    <property type="gene ID" value="ENSDARG00000008852"/>
</dbReference>
<dbReference type="GeneID" id="550331"/>
<dbReference type="KEGG" id="dre:550331"/>
<dbReference type="AGR" id="ZFIN:ZDB-GENE-050417-114"/>
<dbReference type="CTD" id="26610"/>
<dbReference type="ZFIN" id="ZDB-GENE-050417-114">
    <property type="gene designation" value="elp4"/>
</dbReference>
<dbReference type="eggNOG" id="KOG3949">
    <property type="taxonomic scope" value="Eukaryota"/>
</dbReference>
<dbReference type="HOGENOM" id="CLU_031345_3_0_1"/>
<dbReference type="InParanoid" id="Q566Y1"/>
<dbReference type="OrthoDB" id="289162at2759"/>
<dbReference type="PhylomeDB" id="Q566Y1"/>
<dbReference type="TreeFam" id="TF320797"/>
<dbReference type="UniPathway" id="UPA00988"/>
<dbReference type="PRO" id="PR:Q566Y1"/>
<dbReference type="Proteomes" id="UP000000437">
    <property type="component" value="Chromosome 7"/>
</dbReference>
<dbReference type="Bgee" id="ENSDARG00000008852">
    <property type="expression patterns" value="Expressed in mature ovarian follicle and 20 other cell types or tissues"/>
</dbReference>
<dbReference type="ExpressionAtlas" id="Q566Y1">
    <property type="expression patterns" value="baseline and differential"/>
</dbReference>
<dbReference type="GO" id="GO:0005737">
    <property type="term" value="C:cytoplasm"/>
    <property type="evidence" value="ECO:0000250"/>
    <property type="project" value="UniProtKB"/>
</dbReference>
<dbReference type="GO" id="GO:0033588">
    <property type="term" value="C:elongator holoenzyme complex"/>
    <property type="evidence" value="ECO:0000318"/>
    <property type="project" value="GO_Central"/>
</dbReference>
<dbReference type="GO" id="GO:0008023">
    <property type="term" value="C:transcription elongation factor complex"/>
    <property type="evidence" value="ECO:0000250"/>
    <property type="project" value="UniProtKB"/>
</dbReference>
<dbReference type="GO" id="GO:0008607">
    <property type="term" value="F:phosphorylase kinase regulator activity"/>
    <property type="evidence" value="ECO:0000250"/>
    <property type="project" value="UniProtKB"/>
</dbReference>
<dbReference type="GO" id="GO:0006357">
    <property type="term" value="P:regulation of transcription by RNA polymerase II"/>
    <property type="evidence" value="ECO:0000250"/>
    <property type="project" value="UniProtKB"/>
</dbReference>
<dbReference type="GO" id="GO:0002098">
    <property type="term" value="P:tRNA wobble uridine modification"/>
    <property type="evidence" value="ECO:0000318"/>
    <property type="project" value="GO_Central"/>
</dbReference>
<dbReference type="CDD" id="cd19494">
    <property type="entry name" value="Elp4"/>
    <property type="match status" value="1"/>
</dbReference>
<dbReference type="Gene3D" id="3.40.50.300">
    <property type="entry name" value="P-loop containing nucleotide triphosphate hydrolases"/>
    <property type="match status" value="1"/>
</dbReference>
<dbReference type="InterPro" id="IPR008728">
    <property type="entry name" value="Elongator_complex_protein_4"/>
</dbReference>
<dbReference type="InterPro" id="IPR027417">
    <property type="entry name" value="P-loop_NTPase"/>
</dbReference>
<dbReference type="PANTHER" id="PTHR12896:SF1">
    <property type="entry name" value="ELONGATOR COMPLEX PROTEIN 4"/>
    <property type="match status" value="1"/>
</dbReference>
<dbReference type="PANTHER" id="PTHR12896">
    <property type="entry name" value="PAX6 NEIGHBOR PROTEIN PAXNEB"/>
    <property type="match status" value="1"/>
</dbReference>
<dbReference type="Pfam" id="PF05625">
    <property type="entry name" value="PAXNEB"/>
    <property type="match status" value="1"/>
</dbReference>
<comment type="function">
    <text evidence="1">Component of the elongator complex which is required for multiple tRNA modifications, including mcm5U (5-methoxycarbonylmethyl uridine), mcm5s2U (5-methoxycarbonylmethyl-2-thiouridine), and ncm5U (5-carbamoylmethyl uridine). The elongator complex catalyzes the formation of carboxymethyluridine in the wobble base at position 34 in tRNAs.</text>
</comment>
<comment type="pathway">
    <text evidence="1">tRNA modification; 5-methoxycarbonylmethyl-2-thiouridine-tRNA biosynthesis.</text>
</comment>
<comment type="subunit">
    <text evidence="1">Component of the elongator complex.</text>
</comment>
<comment type="subcellular location">
    <subcellularLocation>
        <location evidence="1">Cytoplasm</location>
    </subcellularLocation>
    <subcellularLocation>
        <location evidence="1">Nucleus</location>
    </subcellularLocation>
</comment>
<comment type="similarity">
    <text evidence="2">Belongs to the ELP4 family.</text>
</comment>
<comment type="caution">
    <text evidence="1">The elongator complex was originally thought to play a role in transcription elongation. However, it is no longer thought to play a direct role in this process and its primary function is thought to be in tRNA modification.</text>
</comment>
<sequence>MAAPVRGMAVSSSIGNTTSFQKKTRSKLVFIPGTRPSVQNGQLLVSSGVSSLDYVIGGGLAVGTLLLVEEDRYDSYSRMLLKYFLAEGIVCGHELFLASARDHPDQIMQELPSPILDDVASMKMSEGQSQPNDPDNPDTMKIAWRYQNQPRVQTALASSSRFGHYYDASKTMDPELLQAAKYHSFYQLQETPVTTGLSSLPSPYLALLKSIQTLIQKEGFDGSTPQLRGRNVLRVGLHSLGSVLWGDDVCCKDNSAHCHALSTFLYALRGLLRTSLSVAMMTVPSHLIQSRAVMGRIIRLSDTAIALESFRGSEKETNPLYKDYHGLLYVRQIPRLNCLTSEVPDTKDLAFKLKRKQFTIERLHLPPDLSETVSRVSKADLAAGCASTATGNKHLHF</sequence>
<keyword id="KW-0963">Cytoplasm</keyword>
<keyword id="KW-0539">Nucleus</keyword>
<keyword id="KW-1185">Reference proteome</keyword>
<keyword id="KW-0819">tRNA processing</keyword>
<name>ELP4_DANRE</name>
<evidence type="ECO:0000250" key="1">
    <source>
        <dbReference type="UniProtKB" id="Q96EB1"/>
    </source>
</evidence>
<evidence type="ECO:0000305" key="2"/>
<organism>
    <name type="scientific">Danio rerio</name>
    <name type="common">Zebrafish</name>
    <name type="synonym">Brachydanio rerio</name>
    <dbReference type="NCBI Taxonomy" id="7955"/>
    <lineage>
        <taxon>Eukaryota</taxon>
        <taxon>Metazoa</taxon>
        <taxon>Chordata</taxon>
        <taxon>Craniata</taxon>
        <taxon>Vertebrata</taxon>
        <taxon>Euteleostomi</taxon>
        <taxon>Actinopterygii</taxon>
        <taxon>Neopterygii</taxon>
        <taxon>Teleostei</taxon>
        <taxon>Ostariophysi</taxon>
        <taxon>Cypriniformes</taxon>
        <taxon>Danionidae</taxon>
        <taxon>Danioninae</taxon>
        <taxon>Danio</taxon>
    </lineage>
</organism>
<reference key="1">
    <citation type="journal article" date="2013" name="Nature">
        <title>The zebrafish reference genome sequence and its relationship to the human genome.</title>
        <authorList>
            <person name="Howe K."/>
            <person name="Clark M.D."/>
            <person name="Torroja C.F."/>
            <person name="Torrance J."/>
            <person name="Berthelot C."/>
            <person name="Muffato M."/>
            <person name="Collins J.E."/>
            <person name="Humphray S."/>
            <person name="McLaren K."/>
            <person name="Matthews L."/>
            <person name="McLaren S."/>
            <person name="Sealy I."/>
            <person name="Caccamo M."/>
            <person name="Churcher C."/>
            <person name="Scott C."/>
            <person name="Barrett J.C."/>
            <person name="Koch R."/>
            <person name="Rauch G.J."/>
            <person name="White S."/>
            <person name="Chow W."/>
            <person name="Kilian B."/>
            <person name="Quintais L.T."/>
            <person name="Guerra-Assuncao J.A."/>
            <person name="Zhou Y."/>
            <person name="Gu Y."/>
            <person name="Yen J."/>
            <person name="Vogel J.H."/>
            <person name="Eyre T."/>
            <person name="Redmond S."/>
            <person name="Banerjee R."/>
            <person name="Chi J."/>
            <person name="Fu B."/>
            <person name="Langley E."/>
            <person name="Maguire S.F."/>
            <person name="Laird G.K."/>
            <person name="Lloyd D."/>
            <person name="Kenyon E."/>
            <person name="Donaldson S."/>
            <person name="Sehra H."/>
            <person name="Almeida-King J."/>
            <person name="Loveland J."/>
            <person name="Trevanion S."/>
            <person name="Jones M."/>
            <person name="Quail M."/>
            <person name="Willey D."/>
            <person name="Hunt A."/>
            <person name="Burton J."/>
            <person name="Sims S."/>
            <person name="McLay K."/>
            <person name="Plumb B."/>
            <person name="Davis J."/>
            <person name="Clee C."/>
            <person name="Oliver K."/>
            <person name="Clark R."/>
            <person name="Riddle C."/>
            <person name="Elliot D."/>
            <person name="Threadgold G."/>
            <person name="Harden G."/>
            <person name="Ware D."/>
            <person name="Begum S."/>
            <person name="Mortimore B."/>
            <person name="Kerry G."/>
            <person name="Heath P."/>
            <person name="Phillimore B."/>
            <person name="Tracey A."/>
            <person name="Corby N."/>
            <person name="Dunn M."/>
            <person name="Johnson C."/>
            <person name="Wood J."/>
            <person name="Clark S."/>
            <person name="Pelan S."/>
            <person name="Griffiths G."/>
            <person name="Smith M."/>
            <person name="Glithero R."/>
            <person name="Howden P."/>
            <person name="Barker N."/>
            <person name="Lloyd C."/>
            <person name="Stevens C."/>
            <person name="Harley J."/>
            <person name="Holt K."/>
            <person name="Panagiotidis G."/>
            <person name="Lovell J."/>
            <person name="Beasley H."/>
            <person name="Henderson C."/>
            <person name="Gordon D."/>
            <person name="Auger K."/>
            <person name="Wright D."/>
            <person name="Collins J."/>
            <person name="Raisen C."/>
            <person name="Dyer L."/>
            <person name="Leung K."/>
            <person name="Robertson L."/>
            <person name="Ambridge K."/>
            <person name="Leongamornlert D."/>
            <person name="McGuire S."/>
            <person name="Gilderthorp R."/>
            <person name="Griffiths C."/>
            <person name="Manthravadi D."/>
            <person name="Nichol S."/>
            <person name="Barker G."/>
            <person name="Whitehead S."/>
            <person name="Kay M."/>
            <person name="Brown J."/>
            <person name="Murnane C."/>
            <person name="Gray E."/>
            <person name="Humphries M."/>
            <person name="Sycamore N."/>
            <person name="Barker D."/>
            <person name="Saunders D."/>
            <person name="Wallis J."/>
            <person name="Babbage A."/>
            <person name="Hammond S."/>
            <person name="Mashreghi-Mohammadi M."/>
            <person name="Barr L."/>
            <person name="Martin S."/>
            <person name="Wray P."/>
            <person name="Ellington A."/>
            <person name="Matthews N."/>
            <person name="Ellwood M."/>
            <person name="Woodmansey R."/>
            <person name="Clark G."/>
            <person name="Cooper J."/>
            <person name="Tromans A."/>
            <person name="Grafham D."/>
            <person name="Skuce C."/>
            <person name="Pandian R."/>
            <person name="Andrews R."/>
            <person name="Harrison E."/>
            <person name="Kimberley A."/>
            <person name="Garnett J."/>
            <person name="Fosker N."/>
            <person name="Hall R."/>
            <person name="Garner P."/>
            <person name="Kelly D."/>
            <person name="Bird C."/>
            <person name="Palmer S."/>
            <person name="Gehring I."/>
            <person name="Berger A."/>
            <person name="Dooley C.M."/>
            <person name="Ersan-Urun Z."/>
            <person name="Eser C."/>
            <person name="Geiger H."/>
            <person name="Geisler M."/>
            <person name="Karotki L."/>
            <person name="Kirn A."/>
            <person name="Konantz J."/>
            <person name="Konantz M."/>
            <person name="Oberlander M."/>
            <person name="Rudolph-Geiger S."/>
            <person name="Teucke M."/>
            <person name="Lanz C."/>
            <person name="Raddatz G."/>
            <person name="Osoegawa K."/>
            <person name="Zhu B."/>
            <person name="Rapp A."/>
            <person name="Widaa S."/>
            <person name="Langford C."/>
            <person name="Yang F."/>
            <person name="Schuster S.C."/>
            <person name="Carter N.P."/>
            <person name="Harrow J."/>
            <person name="Ning Z."/>
            <person name="Herrero J."/>
            <person name="Searle S.M."/>
            <person name="Enright A."/>
            <person name="Geisler R."/>
            <person name="Plasterk R.H."/>
            <person name="Lee C."/>
            <person name="Westerfield M."/>
            <person name="de Jong P.J."/>
            <person name="Zon L.I."/>
            <person name="Postlethwait J.H."/>
            <person name="Nusslein-Volhard C."/>
            <person name="Hubbard T.J."/>
            <person name="Roest Crollius H."/>
            <person name="Rogers J."/>
            <person name="Stemple D.L."/>
        </authorList>
    </citation>
    <scope>NUCLEOTIDE SEQUENCE [LARGE SCALE GENOMIC DNA]</scope>
    <source>
        <strain>Tuebingen</strain>
    </source>
</reference>
<reference key="2">
    <citation type="submission" date="2005-04" db="EMBL/GenBank/DDBJ databases">
        <authorList>
            <consortium name="NIH - Zebrafish Gene Collection (ZGC) project"/>
        </authorList>
    </citation>
    <scope>NUCLEOTIDE SEQUENCE [LARGE SCALE MRNA]</scope>
    <source>
        <tissue>Ovary</tissue>
    </source>
</reference>
<protein>
    <recommendedName>
        <fullName>Elongator complex protein 4</fullName>
        <shortName>ELP4</shortName>
    </recommendedName>
</protein>
<proteinExistence type="evidence at transcript level"/>
<gene>
    <name type="primary">elp4</name>
    <name type="ORF">si:dkey-157g7.1</name>
    <name type="ORF">zgc:112389</name>
</gene>
<feature type="chain" id="PRO_0000284006" description="Elongator complex protein 4">
    <location>
        <begin position="1"/>
        <end position="397"/>
    </location>
</feature>
<feature type="sequence conflict" description="In Ref. 2; AAH93280." evidence="2" ref="2">
    <original>F</original>
    <variation>S</variation>
    <location>
        <position position="30"/>
    </location>
</feature>
<feature type="sequence conflict" description="In Ref. 2; AAH93280." evidence="2" ref="2">
    <original>S</original>
    <variation>P</variation>
    <location>
        <position position="47"/>
    </location>
</feature>
<feature type="sequence conflict" description="In Ref. 2; AAH93280." evidence="2" ref="2">
    <original>R</original>
    <variation>L</variation>
    <location>
        <position position="331"/>
    </location>
</feature>
<accession>Q566Y1</accession>
<accession>A2BDL9</accession>